<organism>
    <name type="scientific">Glaesserella parasuis serovar 5 (strain SH0165)</name>
    <name type="common">Haemophilus parasuis</name>
    <dbReference type="NCBI Taxonomy" id="557723"/>
    <lineage>
        <taxon>Bacteria</taxon>
        <taxon>Pseudomonadati</taxon>
        <taxon>Pseudomonadota</taxon>
        <taxon>Gammaproteobacteria</taxon>
        <taxon>Pasteurellales</taxon>
        <taxon>Pasteurellaceae</taxon>
        <taxon>Glaesserella</taxon>
    </lineage>
</organism>
<dbReference type="EMBL" id="CP001321">
    <property type="protein sequence ID" value="ACL33309.1"/>
    <property type="molecule type" value="Genomic_DNA"/>
</dbReference>
<dbReference type="RefSeq" id="WP_005713327.1">
    <property type="nucleotide sequence ID" value="NC_011852.1"/>
</dbReference>
<dbReference type="SMR" id="B8F7K7"/>
<dbReference type="STRING" id="557723.HAPS_1799"/>
<dbReference type="KEGG" id="hap:HAPS_1799"/>
<dbReference type="HOGENOM" id="CLU_114306_2_1_6"/>
<dbReference type="Proteomes" id="UP000006743">
    <property type="component" value="Chromosome"/>
</dbReference>
<dbReference type="GO" id="GO:1990904">
    <property type="term" value="C:ribonucleoprotein complex"/>
    <property type="evidence" value="ECO:0007669"/>
    <property type="project" value="UniProtKB-KW"/>
</dbReference>
<dbReference type="GO" id="GO:0005840">
    <property type="term" value="C:ribosome"/>
    <property type="evidence" value="ECO:0007669"/>
    <property type="project" value="UniProtKB-KW"/>
</dbReference>
<dbReference type="GO" id="GO:0003735">
    <property type="term" value="F:structural constituent of ribosome"/>
    <property type="evidence" value="ECO:0007669"/>
    <property type="project" value="InterPro"/>
</dbReference>
<dbReference type="GO" id="GO:0006412">
    <property type="term" value="P:translation"/>
    <property type="evidence" value="ECO:0007669"/>
    <property type="project" value="UniProtKB-UniRule"/>
</dbReference>
<dbReference type="Gene3D" id="4.10.830.30">
    <property type="entry name" value="Ribosomal protein L31"/>
    <property type="match status" value="1"/>
</dbReference>
<dbReference type="HAMAP" id="MF_00502">
    <property type="entry name" value="Ribosomal_bL31_2"/>
    <property type="match status" value="1"/>
</dbReference>
<dbReference type="InterPro" id="IPR034704">
    <property type="entry name" value="Ribosomal_bL28/bL31-like_sf"/>
</dbReference>
<dbReference type="InterPro" id="IPR002150">
    <property type="entry name" value="Ribosomal_bL31"/>
</dbReference>
<dbReference type="InterPro" id="IPR027493">
    <property type="entry name" value="Ribosomal_bL31_B"/>
</dbReference>
<dbReference type="InterPro" id="IPR042105">
    <property type="entry name" value="Ribosomal_bL31_sf"/>
</dbReference>
<dbReference type="NCBIfam" id="TIGR00105">
    <property type="entry name" value="L31"/>
    <property type="match status" value="1"/>
</dbReference>
<dbReference type="NCBIfam" id="NF002462">
    <property type="entry name" value="PRK01678.1"/>
    <property type="match status" value="1"/>
</dbReference>
<dbReference type="PANTHER" id="PTHR33280">
    <property type="entry name" value="50S RIBOSOMAL PROTEIN L31, CHLOROPLASTIC"/>
    <property type="match status" value="1"/>
</dbReference>
<dbReference type="PANTHER" id="PTHR33280:SF1">
    <property type="entry name" value="LARGE RIBOSOMAL SUBUNIT PROTEIN BL31C"/>
    <property type="match status" value="1"/>
</dbReference>
<dbReference type="Pfam" id="PF01197">
    <property type="entry name" value="Ribosomal_L31"/>
    <property type="match status" value="1"/>
</dbReference>
<dbReference type="PRINTS" id="PR01249">
    <property type="entry name" value="RIBOSOMALL31"/>
</dbReference>
<dbReference type="SUPFAM" id="SSF143800">
    <property type="entry name" value="L28p-like"/>
    <property type="match status" value="1"/>
</dbReference>
<dbReference type="PROSITE" id="PS01143">
    <property type="entry name" value="RIBOSOMAL_L31"/>
    <property type="match status" value="1"/>
</dbReference>
<name>RL31B_GLAP5</name>
<accession>B8F7K7</accession>
<evidence type="ECO:0000255" key="1">
    <source>
        <dbReference type="HAMAP-Rule" id="MF_00502"/>
    </source>
</evidence>
<evidence type="ECO:0000305" key="2"/>
<reference key="1">
    <citation type="journal article" date="2009" name="J. Bacteriol.">
        <title>Complete genome sequence of Haemophilus parasuis SH0165.</title>
        <authorList>
            <person name="Yue M."/>
            <person name="Yang F."/>
            <person name="Yang J."/>
            <person name="Bei W."/>
            <person name="Cai X."/>
            <person name="Chen L."/>
            <person name="Dong J."/>
            <person name="Zhou R."/>
            <person name="Jin M."/>
            <person name="Jin Q."/>
            <person name="Chen H."/>
        </authorList>
    </citation>
    <scope>NUCLEOTIDE SEQUENCE [LARGE SCALE GENOMIC DNA]</scope>
    <source>
        <strain>SH0165</strain>
    </source>
</reference>
<gene>
    <name evidence="1" type="primary">rpmE2</name>
    <name type="ordered locus">HAPS_1799</name>
</gene>
<keyword id="KW-1185">Reference proteome</keyword>
<keyword id="KW-0687">Ribonucleoprotein</keyword>
<keyword id="KW-0689">Ribosomal protein</keyword>
<comment type="subunit">
    <text evidence="1">Part of the 50S ribosomal subunit.</text>
</comment>
<comment type="similarity">
    <text evidence="1">Belongs to the bacterial ribosomal protein bL31 family. Type B subfamily.</text>
</comment>
<sequence>MKKGIHPENYREVLFYDGSVQQGWIIRSCAATNKTMVWEDGKEYPLYPLDTSSASHPVYTGKRREANTEGRASKFNERFKGISSLTKK</sequence>
<proteinExistence type="inferred from homology"/>
<feature type="chain" id="PRO_1000176987" description="Large ribosomal subunit protein bL31B">
    <location>
        <begin position="1"/>
        <end position="88"/>
    </location>
</feature>
<protein>
    <recommendedName>
        <fullName evidence="1">Large ribosomal subunit protein bL31B</fullName>
    </recommendedName>
    <alternativeName>
        <fullName evidence="2">50S ribosomal protein L31 type B</fullName>
    </alternativeName>
</protein>